<evidence type="ECO:0000255" key="1"/>
<evidence type="ECO:0000255" key="2">
    <source>
        <dbReference type="HAMAP-Rule" id="MF_00548"/>
    </source>
</evidence>
<evidence type="ECO:0000269" key="3">
    <source>
    </source>
</evidence>
<evidence type="ECO:0000303" key="4">
    <source>
    </source>
</evidence>
<evidence type="ECO:0000305" key="5"/>
<evidence type="ECO:0000305" key="6">
    <source>
    </source>
</evidence>
<sequence>MSVPLILTLLAGAATFIGAFLGVLGQKPSNRVLAFSLGFAAGIMLLISLMEMLPAALDTEGMSPVLGYGMFIIGLLGYFGLDRLLPHAHPQDLVQKRQQPLPGSIKRTAILLTLGISLHNFPEGIATFVTASSNLELGFGIALAVALHNIPEGLAVAGPVYAATGSKRTAIFWAGISGMAEILGGVLAWLILGSLVSPIVMAAIMAAVAGIMVALSVDELMPLAKEIDPNNNPSYGVLCGMSIMGLSLVILQTIGIG</sequence>
<keyword id="KW-0997">Cell inner membrane</keyword>
<keyword id="KW-1003">Cell membrane</keyword>
<keyword id="KW-0406">Ion transport</keyword>
<keyword id="KW-0408">Iron</keyword>
<keyword id="KW-0472">Membrane</keyword>
<keyword id="KW-0479">Metal-binding</keyword>
<keyword id="KW-1185">Reference proteome</keyword>
<keyword id="KW-0812">Transmembrane</keyword>
<keyword id="KW-1133">Transmembrane helix</keyword>
<keyword id="KW-0813">Transport</keyword>
<keyword id="KW-0862">Zinc</keyword>
<keyword id="KW-0864">Zinc transport</keyword>
<organism>
    <name type="scientific">Salmonella typhimurium (strain LT2 / SGSC1412 / ATCC 700720)</name>
    <dbReference type="NCBI Taxonomy" id="99287"/>
    <lineage>
        <taxon>Bacteria</taxon>
        <taxon>Pseudomonadati</taxon>
        <taxon>Pseudomonadota</taxon>
        <taxon>Gammaproteobacteria</taxon>
        <taxon>Enterobacterales</taxon>
        <taxon>Enterobacteriaceae</taxon>
        <taxon>Salmonella</taxon>
    </lineage>
</organism>
<gene>
    <name evidence="2 4" type="primary">zupT</name>
    <name type="ordered locus">STM3190</name>
</gene>
<accession>P67470</accession>
<accession>Q8XGR4</accession>
<proteinExistence type="evidence at protein level"/>
<name>ZUPT_SALTY</name>
<reference key="1">
    <citation type="journal article" date="2001" name="Nature">
        <title>Complete genome sequence of Salmonella enterica serovar Typhimurium LT2.</title>
        <authorList>
            <person name="McClelland M."/>
            <person name="Sanderson K.E."/>
            <person name="Spieth J."/>
            <person name="Clifton S.W."/>
            <person name="Latreille P."/>
            <person name="Courtney L."/>
            <person name="Porwollik S."/>
            <person name="Ali J."/>
            <person name="Dante M."/>
            <person name="Du F."/>
            <person name="Hou S."/>
            <person name="Layman D."/>
            <person name="Leonard S."/>
            <person name="Nguyen C."/>
            <person name="Scott K."/>
            <person name="Holmes A."/>
            <person name="Grewal N."/>
            <person name="Mulvaney E."/>
            <person name="Ryan E."/>
            <person name="Sun H."/>
            <person name="Florea L."/>
            <person name="Miller W."/>
            <person name="Stoneking T."/>
            <person name="Nhan M."/>
            <person name="Waterston R."/>
            <person name="Wilson R.K."/>
        </authorList>
    </citation>
    <scope>NUCLEOTIDE SEQUENCE [LARGE SCALE GENOMIC DNA]</scope>
    <source>
        <strain>LT2 / SGSC1412 / ATCC 700720</strain>
    </source>
</reference>
<reference key="2">
    <citation type="journal article" date="2014" name="Metallomics">
        <title>The ZupT transporter plays an important role in zinc homeostasis and contributes to Salmonella enterica virulence.</title>
        <authorList>
            <person name="Cerasi M."/>
            <person name="Liu J.Z."/>
            <person name="Ammendola S."/>
            <person name="Poe A.J."/>
            <person name="Petrarca P."/>
            <person name="Pesciaroli M."/>
            <person name="Pasquali P."/>
            <person name="Raffatellu M."/>
            <person name="Battistoni A."/>
        </authorList>
    </citation>
    <scope>FUNCTION</scope>
    <scope>FUNCTION IN VIRULENCE</scope>
    <scope>CATALYTIC ACTIVITY</scope>
    <scope>INDUCTION</scope>
    <scope>DISRUPTION PHENOTYPE</scope>
    <source>
        <strain>MA6926</strain>
    </source>
</reference>
<dbReference type="EMBL" id="AE006468">
    <property type="protein sequence ID" value="AAL22064.1"/>
    <property type="molecule type" value="Genomic_DNA"/>
</dbReference>
<dbReference type="RefSeq" id="WP_000115874.1">
    <property type="nucleotide sequence ID" value="NC_003197.2"/>
</dbReference>
<dbReference type="SMR" id="P67470"/>
<dbReference type="STRING" id="99287.STM3190"/>
<dbReference type="PaxDb" id="99287-STM3190"/>
<dbReference type="KEGG" id="stm:STM3190"/>
<dbReference type="PATRIC" id="fig|99287.12.peg.3383"/>
<dbReference type="HOGENOM" id="CLU_015114_1_3_6"/>
<dbReference type="OMA" id="HESTGPC"/>
<dbReference type="PhylomeDB" id="P67470"/>
<dbReference type="BioCyc" id="SENT99287:STM3190-MONOMER"/>
<dbReference type="Proteomes" id="UP000001014">
    <property type="component" value="Chromosome"/>
</dbReference>
<dbReference type="GO" id="GO:0016020">
    <property type="term" value="C:membrane"/>
    <property type="evidence" value="ECO:0000318"/>
    <property type="project" value="GO_Central"/>
</dbReference>
<dbReference type="GO" id="GO:0005886">
    <property type="term" value="C:plasma membrane"/>
    <property type="evidence" value="ECO:0007669"/>
    <property type="project" value="UniProtKB-SubCell"/>
</dbReference>
<dbReference type="GO" id="GO:0046872">
    <property type="term" value="F:metal ion binding"/>
    <property type="evidence" value="ECO:0007669"/>
    <property type="project" value="UniProtKB-KW"/>
</dbReference>
<dbReference type="GO" id="GO:0005385">
    <property type="term" value="F:zinc ion transmembrane transporter activity"/>
    <property type="evidence" value="ECO:0000318"/>
    <property type="project" value="GO_Central"/>
</dbReference>
<dbReference type="GO" id="GO:0071577">
    <property type="term" value="P:zinc ion transmembrane transport"/>
    <property type="evidence" value="ECO:0000318"/>
    <property type="project" value="GO_Central"/>
</dbReference>
<dbReference type="HAMAP" id="MF_00548">
    <property type="entry name" value="ZupT"/>
    <property type="match status" value="1"/>
</dbReference>
<dbReference type="InterPro" id="IPR003689">
    <property type="entry name" value="ZIP"/>
</dbReference>
<dbReference type="InterPro" id="IPR023498">
    <property type="entry name" value="Zn_transptr_ZupT"/>
</dbReference>
<dbReference type="NCBIfam" id="NF003243">
    <property type="entry name" value="PRK04201.1"/>
    <property type="match status" value="1"/>
</dbReference>
<dbReference type="PANTHER" id="PTHR11040:SF205">
    <property type="entry name" value="ZINC TRANSPORTER ZUPT"/>
    <property type="match status" value="1"/>
</dbReference>
<dbReference type="PANTHER" id="PTHR11040">
    <property type="entry name" value="ZINC/IRON TRANSPORTER"/>
    <property type="match status" value="1"/>
</dbReference>
<dbReference type="Pfam" id="PF02535">
    <property type="entry name" value="Zip"/>
    <property type="match status" value="2"/>
</dbReference>
<protein>
    <recommendedName>
        <fullName evidence="2 5">Zinc transporter ZupT</fullName>
    </recommendedName>
    <alternativeName>
        <fullName evidence="4">Low affinity zinc transporter ZupT</fullName>
    </alternativeName>
</protein>
<feature type="chain" id="PRO_0000207277" description="Zinc transporter ZupT">
    <location>
        <begin position="1"/>
        <end position="257"/>
    </location>
</feature>
<feature type="transmembrane region" description="Helical" evidence="1">
    <location>
        <begin position="5"/>
        <end position="25"/>
    </location>
</feature>
<feature type="transmembrane region" description="Helical" evidence="1">
    <location>
        <begin position="32"/>
        <end position="52"/>
    </location>
</feature>
<feature type="transmembrane region" description="Helical" evidence="1">
    <location>
        <begin position="61"/>
        <end position="81"/>
    </location>
</feature>
<feature type="transmembrane region" description="Helical" evidence="1">
    <location>
        <begin position="109"/>
        <end position="129"/>
    </location>
</feature>
<feature type="transmembrane region" description="Helical" evidence="1">
    <location>
        <begin position="137"/>
        <end position="157"/>
    </location>
</feature>
<feature type="transmembrane region" description="Helical" evidence="1">
    <location>
        <begin position="171"/>
        <end position="191"/>
    </location>
</feature>
<feature type="transmembrane region" description="Helical" evidence="1">
    <location>
        <begin position="195"/>
        <end position="215"/>
    </location>
</feature>
<feature type="transmembrane region" description="Helical" evidence="1">
    <location>
        <begin position="236"/>
        <end position="256"/>
    </location>
</feature>
<feature type="binding site" description="M2 metal binding site" evidence="2">
    <location>
        <position position="120"/>
    </location>
    <ligand>
        <name>Fe(2+)</name>
        <dbReference type="ChEBI" id="CHEBI:29033"/>
    </ligand>
</feature>
<feature type="binding site" description="M2 metal binding site" evidence="2">
    <location>
        <position position="123"/>
    </location>
    <ligand>
        <name>Fe(2+)</name>
        <dbReference type="ChEBI" id="CHEBI:29033"/>
    </ligand>
</feature>
<feature type="binding site" description="M1 metal binding site" evidence="2">
    <location>
        <position position="123"/>
    </location>
    <ligand>
        <name>Zn(2+)</name>
        <dbReference type="ChEBI" id="CHEBI:29105"/>
    </ligand>
</feature>
<feature type="binding site" description="M1 metal binding site" evidence="2">
    <location>
        <position position="148"/>
    </location>
    <ligand>
        <name>Zn(2+)</name>
        <dbReference type="ChEBI" id="CHEBI:29105"/>
    </ligand>
</feature>
<feature type="binding site" description="M2 metal binding site" evidence="2">
    <location>
        <position position="149"/>
    </location>
    <ligand>
        <name>Fe(2+)</name>
        <dbReference type="ChEBI" id="CHEBI:29033"/>
    </ligand>
</feature>
<feature type="binding site" description="M2 metal binding site" evidence="2">
    <location>
        <position position="152"/>
    </location>
    <ligand>
        <name>Fe(2+)</name>
        <dbReference type="ChEBI" id="CHEBI:29033"/>
    </ligand>
</feature>
<feature type="binding site" description="M1 metal binding site" evidence="2">
    <location>
        <position position="152"/>
    </location>
    <ligand>
        <name>Zn(2+)</name>
        <dbReference type="ChEBI" id="CHEBI:29105"/>
    </ligand>
</feature>
<feature type="binding site" description="M2 metal binding site" evidence="2">
    <location>
        <position position="181"/>
    </location>
    <ligand>
        <name>Fe(2+)</name>
        <dbReference type="ChEBI" id="CHEBI:29033"/>
    </ligand>
</feature>
<comment type="function">
    <text evidence="3 6">Mediates zinc uptake (PubMed:24430377). May also transport other divalent cations (Probable). Contributes to zinc acquisition during infection and plays a role in the ability of S.typhimurium to colonize the host tissues (PubMed:24430377).</text>
</comment>
<comment type="catalytic activity">
    <reaction evidence="2 3">
        <text>Zn(2+)(in) = Zn(2+)(out)</text>
        <dbReference type="Rhea" id="RHEA:29351"/>
        <dbReference type="ChEBI" id="CHEBI:29105"/>
    </reaction>
</comment>
<comment type="subcellular location">
    <subcellularLocation>
        <location evidence="2">Cell inner membrane</location>
        <topology evidence="2">Multi-pass membrane protein</topology>
    </subcellularLocation>
</comment>
<comment type="induction">
    <text evidence="3">Expressed at basal levels in rich medium (PubMed:24430377). Expression increases under zinc limiting conditions (PubMed:24430377).</text>
</comment>
<comment type="disruption phenotype">
    <text evidence="3">Mutant lacking this gene is impaired in its ability to grow in metal devoid environments (PubMed:24430377). Mutant lacking znuABC and zupT exhibits a severe growth defect in zinc devoid media, is hypersensitive to oxidative stress and contains reduced levels of intracellular free zinc (PubMed:24430377).</text>
</comment>
<comment type="similarity">
    <text evidence="2 5">Belongs to the ZIP transporter (TC 2.A.5) family. ZupT subfamily.</text>
</comment>